<accession>Q7C637</accession>
<accession>Q8Z2B8</accession>
<sequence>MQAYFDQLDRVRYEGPQSTNPLAFRHYNPDELVLGKRMEDHLRFAACYWHTFCWNGADMFGVGAFNRPWQQPGEALELAKRKADVAFEFFHKLNVPFYCFHDVDVSPKGASLKEYKNNFAQMVDVLAAKQEQSGVKLLWGTANCFTNPRYGAGAATNPDPEVFSCAATQVVTAMNATHKLGGENYVLWGGREGYETLLNTDLRQEREQIGRFMQMVVEHKHKMGFQGTLLIEPKPQEPTKHQYDYDVATVYGFLKQFGLEKEIKVNIEANHATLAGHSFHHEIATAIALGIFGSVDANRGDAQLGWDTDQFPISVEENALVMYEILKAGGFTTGGLNFDAKVRRQSTDKYDLFYGHIGAMDTMALSLKIAARMVEDGELDKRVAKRYAGWNGELGQQILKGQLSLGELAQYAEQHHLAPVHQSGHQELLENLVNRYLFDK</sequence>
<organism>
    <name type="scientific">Salmonella typhi</name>
    <dbReference type="NCBI Taxonomy" id="90370"/>
    <lineage>
        <taxon>Bacteria</taxon>
        <taxon>Pseudomonadati</taxon>
        <taxon>Pseudomonadota</taxon>
        <taxon>Gammaproteobacteria</taxon>
        <taxon>Enterobacterales</taxon>
        <taxon>Enterobacteriaceae</taxon>
        <taxon>Salmonella</taxon>
    </lineage>
</organism>
<comment type="catalytic activity">
    <reaction evidence="1">
        <text>alpha-D-xylose = alpha-D-xylulofuranose</text>
        <dbReference type="Rhea" id="RHEA:22816"/>
        <dbReference type="ChEBI" id="CHEBI:28518"/>
        <dbReference type="ChEBI" id="CHEBI:188998"/>
        <dbReference type="EC" id="5.3.1.5"/>
    </reaction>
</comment>
<comment type="cofactor">
    <cofactor evidence="1">
        <name>Mg(2+)</name>
        <dbReference type="ChEBI" id="CHEBI:18420"/>
    </cofactor>
    <text evidence="1">Binds 2 magnesium ions per subunit.</text>
</comment>
<comment type="subunit">
    <text evidence="1">Homotetramer.</text>
</comment>
<comment type="subcellular location">
    <subcellularLocation>
        <location evidence="1">Cytoplasm</location>
    </subcellularLocation>
</comment>
<comment type="similarity">
    <text evidence="1">Belongs to the xylose isomerase family.</text>
</comment>
<protein>
    <recommendedName>
        <fullName evidence="1">Xylose isomerase</fullName>
        <ecNumber evidence="1">5.3.1.5</ecNumber>
    </recommendedName>
</protein>
<proteinExistence type="inferred from homology"/>
<evidence type="ECO:0000255" key="1">
    <source>
        <dbReference type="HAMAP-Rule" id="MF_00455"/>
    </source>
</evidence>
<gene>
    <name evidence="1" type="primary">xylA</name>
    <name type="ordered locus">STY4137</name>
    <name type="ordered locus">t3858</name>
</gene>
<reference key="1">
    <citation type="journal article" date="2001" name="Nature">
        <title>Complete genome sequence of a multiple drug resistant Salmonella enterica serovar Typhi CT18.</title>
        <authorList>
            <person name="Parkhill J."/>
            <person name="Dougan G."/>
            <person name="James K.D."/>
            <person name="Thomson N.R."/>
            <person name="Pickard D."/>
            <person name="Wain J."/>
            <person name="Churcher C.M."/>
            <person name="Mungall K.L."/>
            <person name="Bentley S.D."/>
            <person name="Holden M.T.G."/>
            <person name="Sebaihia M."/>
            <person name="Baker S."/>
            <person name="Basham D."/>
            <person name="Brooks K."/>
            <person name="Chillingworth T."/>
            <person name="Connerton P."/>
            <person name="Cronin A."/>
            <person name="Davis P."/>
            <person name="Davies R.M."/>
            <person name="Dowd L."/>
            <person name="White N."/>
            <person name="Farrar J."/>
            <person name="Feltwell T."/>
            <person name="Hamlin N."/>
            <person name="Haque A."/>
            <person name="Hien T.T."/>
            <person name="Holroyd S."/>
            <person name="Jagels K."/>
            <person name="Krogh A."/>
            <person name="Larsen T.S."/>
            <person name="Leather S."/>
            <person name="Moule S."/>
            <person name="O'Gaora P."/>
            <person name="Parry C."/>
            <person name="Quail M.A."/>
            <person name="Rutherford K.M."/>
            <person name="Simmonds M."/>
            <person name="Skelton J."/>
            <person name="Stevens K."/>
            <person name="Whitehead S."/>
            <person name="Barrell B.G."/>
        </authorList>
    </citation>
    <scope>NUCLEOTIDE SEQUENCE [LARGE SCALE GENOMIC DNA]</scope>
    <source>
        <strain>CT18</strain>
    </source>
</reference>
<reference key="2">
    <citation type="journal article" date="2003" name="J. Bacteriol.">
        <title>Comparative genomics of Salmonella enterica serovar Typhi strains Ty2 and CT18.</title>
        <authorList>
            <person name="Deng W."/>
            <person name="Liou S.-R."/>
            <person name="Plunkett G. III"/>
            <person name="Mayhew G.F."/>
            <person name="Rose D.J."/>
            <person name="Burland V."/>
            <person name="Kodoyianni V."/>
            <person name="Schwartz D.C."/>
            <person name="Blattner F.R."/>
        </authorList>
    </citation>
    <scope>NUCLEOTIDE SEQUENCE [LARGE SCALE GENOMIC DNA]</scope>
    <source>
        <strain>ATCC 700931 / Ty2</strain>
    </source>
</reference>
<dbReference type="EC" id="5.3.1.5" evidence="1"/>
<dbReference type="EMBL" id="AL513382">
    <property type="protein sequence ID" value="CAD07967.1"/>
    <property type="molecule type" value="Genomic_DNA"/>
</dbReference>
<dbReference type="EMBL" id="AE014613">
    <property type="protein sequence ID" value="AAO71338.1"/>
    <property type="molecule type" value="Genomic_DNA"/>
</dbReference>
<dbReference type="RefSeq" id="NP_458266.1">
    <property type="nucleotide sequence ID" value="NC_003198.1"/>
</dbReference>
<dbReference type="RefSeq" id="WP_001149568.1">
    <property type="nucleotide sequence ID" value="NZ_WSUR01000001.1"/>
</dbReference>
<dbReference type="SMR" id="Q7C637"/>
<dbReference type="STRING" id="220341.gene:17587979"/>
<dbReference type="KEGG" id="stt:t3858"/>
<dbReference type="KEGG" id="sty:STY4137"/>
<dbReference type="PATRIC" id="fig|220341.7.peg.4226"/>
<dbReference type="eggNOG" id="COG2115">
    <property type="taxonomic scope" value="Bacteria"/>
</dbReference>
<dbReference type="HOGENOM" id="CLU_037261_1_0_6"/>
<dbReference type="OMA" id="IAYWHTF"/>
<dbReference type="OrthoDB" id="9763981at2"/>
<dbReference type="Proteomes" id="UP000000541">
    <property type="component" value="Chromosome"/>
</dbReference>
<dbReference type="Proteomes" id="UP000002670">
    <property type="component" value="Chromosome"/>
</dbReference>
<dbReference type="GO" id="GO:0005737">
    <property type="term" value="C:cytoplasm"/>
    <property type="evidence" value="ECO:0007669"/>
    <property type="project" value="UniProtKB-SubCell"/>
</dbReference>
<dbReference type="GO" id="GO:0000287">
    <property type="term" value="F:magnesium ion binding"/>
    <property type="evidence" value="ECO:0007669"/>
    <property type="project" value="UniProtKB-UniRule"/>
</dbReference>
<dbReference type="GO" id="GO:0009045">
    <property type="term" value="F:xylose isomerase activity"/>
    <property type="evidence" value="ECO:0007669"/>
    <property type="project" value="UniProtKB-UniRule"/>
</dbReference>
<dbReference type="GO" id="GO:0042732">
    <property type="term" value="P:D-xylose metabolic process"/>
    <property type="evidence" value="ECO:0007669"/>
    <property type="project" value="UniProtKB-UniRule"/>
</dbReference>
<dbReference type="FunFam" id="3.20.20.150:FF:000002">
    <property type="entry name" value="Xylose isomerase"/>
    <property type="match status" value="1"/>
</dbReference>
<dbReference type="Gene3D" id="3.20.20.150">
    <property type="entry name" value="Divalent-metal-dependent TIM barrel enzymes"/>
    <property type="match status" value="1"/>
</dbReference>
<dbReference type="HAMAP" id="MF_00455">
    <property type="entry name" value="Xylose_isom_A"/>
    <property type="match status" value="1"/>
</dbReference>
<dbReference type="InterPro" id="IPR036237">
    <property type="entry name" value="Xyl_isomerase-like_sf"/>
</dbReference>
<dbReference type="InterPro" id="IPR013452">
    <property type="entry name" value="Xylose_isom_bac"/>
</dbReference>
<dbReference type="InterPro" id="IPR001998">
    <property type="entry name" value="Xylose_isomerase"/>
</dbReference>
<dbReference type="NCBIfam" id="NF003998">
    <property type="entry name" value="PRK05474.1"/>
    <property type="match status" value="1"/>
</dbReference>
<dbReference type="NCBIfam" id="TIGR02630">
    <property type="entry name" value="xylose_isom_A"/>
    <property type="match status" value="1"/>
</dbReference>
<dbReference type="PANTHER" id="PTHR48408">
    <property type="match status" value="1"/>
</dbReference>
<dbReference type="PANTHER" id="PTHR48408:SF1">
    <property type="entry name" value="XYLOSE ISOMERASE"/>
    <property type="match status" value="1"/>
</dbReference>
<dbReference type="PRINTS" id="PR00688">
    <property type="entry name" value="XYLOSISMRASE"/>
</dbReference>
<dbReference type="SUPFAM" id="SSF51658">
    <property type="entry name" value="Xylose isomerase-like"/>
    <property type="match status" value="1"/>
</dbReference>
<dbReference type="PROSITE" id="PS51415">
    <property type="entry name" value="XYLOSE_ISOMERASE"/>
    <property type="match status" value="1"/>
</dbReference>
<name>XYLA_SALTI</name>
<feature type="chain" id="PRO_0000195792" description="Xylose isomerase">
    <location>
        <begin position="1"/>
        <end position="440"/>
    </location>
</feature>
<feature type="active site" evidence="1">
    <location>
        <position position="101"/>
    </location>
</feature>
<feature type="active site" evidence="1">
    <location>
        <position position="104"/>
    </location>
</feature>
<feature type="binding site" evidence="1">
    <location>
        <position position="232"/>
    </location>
    <ligand>
        <name>Mg(2+)</name>
        <dbReference type="ChEBI" id="CHEBI:18420"/>
        <label>1</label>
    </ligand>
</feature>
<feature type="binding site" evidence="1">
    <location>
        <position position="268"/>
    </location>
    <ligand>
        <name>Mg(2+)</name>
        <dbReference type="ChEBI" id="CHEBI:18420"/>
        <label>1</label>
    </ligand>
</feature>
<feature type="binding site" evidence="1">
    <location>
        <position position="268"/>
    </location>
    <ligand>
        <name>Mg(2+)</name>
        <dbReference type="ChEBI" id="CHEBI:18420"/>
        <label>2</label>
    </ligand>
</feature>
<feature type="binding site" evidence="1">
    <location>
        <position position="271"/>
    </location>
    <ligand>
        <name>Mg(2+)</name>
        <dbReference type="ChEBI" id="CHEBI:18420"/>
        <label>2</label>
    </ligand>
</feature>
<feature type="binding site" evidence="1">
    <location>
        <position position="296"/>
    </location>
    <ligand>
        <name>Mg(2+)</name>
        <dbReference type="ChEBI" id="CHEBI:18420"/>
        <label>1</label>
    </ligand>
</feature>
<feature type="binding site" evidence="1">
    <location>
        <position position="307"/>
    </location>
    <ligand>
        <name>Mg(2+)</name>
        <dbReference type="ChEBI" id="CHEBI:18420"/>
        <label>2</label>
    </ligand>
</feature>
<feature type="binding site" evidence="1">
    <location>
        <position position="309"/>
    </location>
    <ligand>
        <name>Mg(2+)</name>
        <dbReference type="ChEBI" id="CHEBI:18420"/>
        <label>2</label>
    </ligand>
</feature>
<feature type="binding site" evidence="1">
    <location>
        <position position="339"/>
    </location>
    <ligand>
        <name>Mg(2+)</name>
        <dbReference type="ChEBI" id="CHEBI:18420"/>
        <label>1</label>
    </ligand>
</feature>
<keyword id="KW-0119">Carbohydrate metabolism</keyword>
<keyword id="KW-0963">Cytoplasm</keyword>
<keyword id="KW-0413">Isomerase</keyword>
<keyword id="KW-0460">Magnesium</keyword>
<keyword id="KW-0479">Metal-binding</keyword>
<keyword id="KW-0859">Xylose metabolism</keyword>